<sequence>MTDLPILHVKNLGKADYQPVWQAMKDFTDGRDAHTPDELWLVEHPPVFTQGQAGKAEHLLAPGAIPVVATDRGGQVTYHGPGQLVAYPLLDLRRLKIGVRELVTKIEQSVVALLAEYKIDSAPKADAPGVYVNGDKIASLGLRVRKGCSFHGVAINVDVDLAPFNQINPCGYAGLNMTRLVDLVDTTKQPVVFSDVAKRYTRILSNILGLTAQLKE</sequence>
<protein>
    <recommendedName>
        <fullName evidence="1">Octanoyltransferase</fullName>
        <ecNumber evidence="1">2.3.1.181</ecNumber>
    </recommendedName>
    <alternativeName>
        <fullName evidence="1">Lipoate-protein ligase B</fullName>
    </alternativeName>
    <alternativeName>
        <fullName evidence="1">Lipoyl/octanoyl transferase</fullName>
    </alternativeName>
    <alternativeName>
        <fullName evidence="1">Octanoyl-[acyl-carrier-protein]-protein N-octanoyltransferase</fullName>
    </alternativeName>
</protein>
<gene>
    <name evidence="1" type="primary">lipB</name>
    <name type="ordered locus">Sde_3335</name>
</gene>
<name>LIPB_SACD2</name>
<evidence type="ECO:0000255" key="1">
    <source>
        <dbReference type="HAMAP-Rule" id="MF_00013"/>
    </source>
</evidence>
<evidence type="ECO:0000255" key="2">
    <source>
        <dbReference type="PROSITE-ProRule" id="PRU01067"/>
    </source>
</evidence>
<organism>
    <name type="scientific">Saccharophagus degradans (strain 2-40 / ATCC 43961 / DSM 17024)</name>
    <dbReference type="NCBI Taxonomy" id="203122"/>
    <lineage>
        <taxon>Bacteria</taxon>
        <taxon>Pseudomonadati</taxon>
        <taxon>Pseudomonadota</taxon>
        <taxon>Gammaproteobacteria</taxon>
        <taxon>Cellvibrionales</taxon>
        <taxon>Cellvibrionaceae</taxon>
        <taxon>Saccharophagus</taxon>
    </lineage>
</organism>
<feature type="chain" id="PRO_0000242761" description="Octanoyltransferase">
    <location>
        <begin position="1"/>
        <end position="216"/>
    </location>
</feature>
<feature type="domain" description="BPL/LPL catalytic" evidence="2">
    <location>
        <begin position="33"/>
        <end position="212"/>
    </location>
</feature>
<feature type="active site" description="Acyl-thioester intermediate" evidence="1">
    <location>
        <position position="170"/>
    </location>
</feature>
<feature type="binding site" evidence="1">
    <location>
        <begin position="72"/>
        <end position="79"/>
    </location>
    <ligand>
        <name>substrate</name>
    </ligand>
</feature>
<feature type="binding site" evidence="1">
    <location>
        <begin position="139"/>
        <end position="141"/>
    </location>
    <ligand>
        <name>substrate</name>
    </ligand>
</feature>
<feature type="binding site" evidence="1">
    <location>
        <begin position="152"/>
        <end position="154"/>
    </location>
    <ligand>
        <name>substrate</name>
    </ligand>
</feature>
<feature type="site" description="Lowers pKa of active site Cys" evidence="1">
    <location>
        <position position="136"/>
    </location>
</feature>
<proteinExistence type="inferred from homology"/>
<accession>Q21FD9</accession>
<dbReference type="EC" id="2.3.1.181" evidence="1"/>
<dbReference type="EMBL" id="CP000282">
    <property type="protein sequence ID" value="ABD82590.1"/>
    <property type="molecule type" value="Genomic_DNA"/>
</dbReference>
<dbReference type="RefSeq" id="WP_011469806.1">
    <property type="nucleotide sequence ID" value="NC_007912.1"/>
</dbReference>
<dbReference type="SMR" id="Q21FD9"/>
<dbReference type="STRING" id="203122.Sde_3335"/>
<dbReference type="GeneID" id="98614955"/>
<dbReference type="KEGG" id="sde:Sde_3335"/>
<dbReference type="eggNOG" id="COG0321">
    <property type="taxonomic scope" value="Bacteria"/>
</dbReference>
<dbReference type="HOGENOM" id="CLU_035168_3_1_6"/>
<dbReference type="OrthoDB" id="9787061at2"/>
<dbReference type="UniPathway" id="UPA00538">
    <property type="reaction ID" value="UER00592"/>
</dbReference>
<dbReference type="Proteomes" id="UP000001947">
    <property type="component" value="Chromosome"/>
</dbReference>
<dbReference type="GO" id="GO:0005737">
    <property type="term" value="C:cytoplasm"/>
    <property type="evidence" value="ECO:0007669"/>
    <property type="project" value="UniProtKB-SubCell"/>
</dbReference>
<dbReference type="GO" id="GO:0033819">
    <property type="term" value="F:lipoyl(octanoyl) transferase activity"/>
    <property type="evidence" value="ECO:0007669"/>
    <property type="project" value="UniProtKB-EC"/>
</dbReference>
<dbReference type="GO" id="GO:0036211">
    <property type="term" value="P:protein modification process"/>
    <property type="evidence" value="ECO:0007669"/>
    <property type="project" value="InterPro"/>
</dbReference>
<dbReference type="CDD" id="cd16444">
    <property type="entry name" value="LipB"/>
    <property type="match status" value="1"/>
</dbReference>
<dbReference type="FunFam" id="3.30.930.10:FF:000020">
    <property type="entry name" value="Octanoyltransferase"/>
    <property type="match status" value="1"/>
</dbReference>
<dbReference type="Gene3D" id="3.30.930.10">
    <property type="entry name" value="Bira Bifunctional Protein, Domain 2"/>
    <property type="match status" value="1"/>
</dbReference>
<dbReference type="HAMAP" id="MF_00013">
    <property type="entry name" value="LipB"/>
    <property type="match status" value="1"/>
</dbReference>
<dbReference type="InterPro" id="IPR045864">
    <property type="entry name" value="aa-tRNA-synth_II/BPL/LPL"/>
</dbReference>
<dbReference type="InterPro" id="IPR004143">
    <property type="entry name" value="BPL_LPL_catalytic"/>
</dbReference>
<dbReference type="InterPro" id="IPR000544">
    <property type="entry name" value="Octanoyltransferase"/>
</dbReference>
<dbReference type="InterPro" id="IPR020605">
    <property type="entry name" value="Octanoyltransferase_CS"/>
</dbReference>
<dbReference type="NCBIfam" id="TIGR00214">
    <property type="entry name" value="lipB"/>
    <property type="match status" value="1"/>
</dbReference>
<dbReference type="NCBIfam" id="NF010922">
    <property type="entry name" value="PRK14342.1"/>
    <property type="match status" value="1"/>
</dbReference>
<dbReference type="PANTHER" id="PTHR10993:SF7">
    <property type="entry name" value="LIPOYLTRANSFERASE 2, MITOCHONDRIAL-RELATED"/>
    <property type="match status" value="1"/>
</dbReference>
<dbReference type="PANTHER" id="PTHR10993">
    <property type="entry name" value="OCTANOYLTRANSFERASE"/>
    <property type="match status" value="1"/>
</dbReference>
<dbReference type="Pfam" id="PF21948">
    <property type="entry name" value="LplA-B_cat"/>
    <property type="match status" value="1"/>
</dbReference>
<dbReference type="PIRSF" id="PIRSF016262">
    <property type="entry name" value="LPLase"/>
    <property type="match status" value="1"/>
</dbReference>
<dbReference type="SUPFAM" id="SSF55681">
    <property type="entry name" value="Class II aaRS and biotin synthetases"/>
    <property type="match status" value="1"/>
</dbReference>
<dbReference type="PROSITE" id="PS51733">
    <property type="entry name" value="BPL_LPL_CATALYTIC"/>
    <property type="match status" value="1"/>
</dbReference>
<dbReference type="PROSITE" id="PS01313">
    <property type="entry name" value="LIPB"/>
    <property type="match status" value="1"/>
</dbReference>
<keyword id="KW-0012">Acyltransferase</keyword>
<keyword id="KW-0963">Cytoplasm</keyword>
<keyword id="KW-1185">Reference proteome</keyword>
<keyword id="KW-0808">Transferase</keyword>
<reference key="1">
    <citation type="journal article" date="2008" name="PLoS Genet.">
        <title>Complete genome sequence of the complex carbohydrate-degrading marine bacterium, Saccharophagus degradans strain 2-40 T.</title>
        <authorList>
            <person name="Weiner R.M."/>
            <person name="Taylor L.E. II"/>
            <person name="Henrissat B."/>
            <person name="Hauser L."/>
            <person name="Land M."/>
            <person name="Coutinho P.M."/>
            <person name="Rancurel C."/>
            <person name="Saunders E.H."/>
            <person name="Longmire A.G."/>
            <person name="Zhang H."/>
            <person name="Bayer E.A."/>
            <person name="Gilbert H.J."/>
            <person name="Larimer F."/>
            <person name="Zhulin I.B."/>
            <person name="Ekborg N.A."/>
            <person name="Lamed R."/>
            <person name="Richardson P.M."/>
            <person name="Borovok I."/>
            <person name="Hutcheson S."/>
        </authorList>
    </citation>
    <scope>NUCLEOTIDE SEQUENCE [LARGE SCALE GENOMIC DNA]</scope>
    <source>
        <strain>2-40 / ATCC 43961 / DSM 17024</strain>
    </source>
</reference>
<comment type="function">
    <text evidence="1">Catalyzes the transfer of endogenously produced octanoic acid from octanoyl-acyl-carrier-protein onto the lipoyl domains of lipoate-dependent enzymes. Lipoyl-ACP can also act as a substrate although octanoyl-ACP is likely to be the physiological substrate.</text>
</comment>
<comment type="catalytic activity">
    <reaction evidence="1">
        <text>octanoyl-[ACP] + L-lysyl-[protein] = N(6)-octanoyl-L-lysyl-[protein] + holo-[ACP] + H(+)</text>
        <dbReference type="Rhea" id="RHEA:17665"/>
        <dbReference type="Rhea" id="RHEA-COMP:9636"/>
        <dbReference type="Rhea" id="RHEA-COMP:9685"/>
        <dbReference type="Rhea" id="RHEA-COMP:9752"/>
        <dbReference type="Rhea" id="RHEA-COMP:9928"/>
        <dbReference type="ChEBI" id="CHEBI:15378"/>
        <dbReference type="ChEBI" id="CHEBI:29969"/>
        <dbReference type="ChEBI" id="CHEBI:64479"/>
        <dbReference type="ChEBI" id="CHEBI:78463"/>
        <dbReference type="ChEBI" id="CHEBI:78809"/>
        <dbReference type="EC" id="2.3.1.181"/>
    </reaction>
</comment>
<comment type="pathway">
    <text evidence="1">Protein modification; protein lipoylation via endogenous pathway; protein N(6)-(lipoyl)lysine from octanoyl-[acyl-carrier-protein]: step 1/2.</text>
</comment>
<comment type="subcellular location">
    <subcellularLocation>
        <location evidence="1">Cytoplasm</location>
    </subcellularLocation>
</comment>
<comment type="miscellaneous">
    <text evidence="1">In the reaction, the free carboxyl group of octanoic acid is attached via an amide linkage to the epsilon-amino group of a specific lysine residue of lipoyl domains of lipoate-dependent enzymes.</text>
</comment>
<comment type="similarity">
    <text evidence="1">Belongs to the LipB family.</text>
</comment>